<evidence type="ECO:0000250" key="1">
    <source>
        <dbReference type="UniProtKB" id="O15389"/>
    </source>
</evidence>
<evidence type="ECO:0000255" key="2"/>
<evidence type="ECO:0000255" key="3">
    <source>
        <dbReference type="PROSITE-ProRule" id="PRU00114"/>
    </source>
</evidence>
<evidence type="ECO:0000256" key="4">
    <source>
        <dbReference type="SAM" id="MobiDB-lite"/>
    </source>
</evidence>
<evidence type="ECO:0000305" key="5"/>
<proteinExistence type="evidence at transcript level"/>
<organism>
    <name type="scientific">Mus musculus</name>
    <name type="common">Mouse</name>
    <dbReference type="NCBI Taxonomy" id="10090"/>
    <lineage>
        <taxon>Eukaryota</taxon>
        <taxon>Metazoa</taxon>
        <taxon>Chordata</taxon>
        <taxon>Craniata</taxon>
        <taxon>Vertebrata</taxon>
        <taxon>Euteleostomi</taxon>
        <taxon>Mammalia</taxon>
        <taxon>Eutheria</taxon>
        <taxon>Euarchontoglires</taxon>
        <taxon>Glires</taxon>
        <taxon>Rodentia</taxon>
        <taxon>Myomorpha</taxon>
        <taxon>Muroidea</taxon>
        <taxon>Muridae</taxon>
        <taxon>Murinae</taxon>
        <taxon>Mus</taxon>
        <taxon>Mus</taxon>
    </lineage>
</organism>
<comment type="function">
    <text>Putative adhesion molecule that mediates sialic-acid dependent binding to cells. Preferentially binds to alpha-2,3-linked sialic acid. The sialic acid recognition site may be masked by cis interactions with sialic acids on the same cell surface.</text>
</comment>
<comment type="subcellular location">
    <subcellularLocation>
        <location>Membrane</location>
        <topology>Single-pass type I membrane protein</topology>
    </subcellularLocation>
</comment>
<comment type="tissue specificity">
    <text>Predominantly expressed by immature monocytic/myeloid lineage cells in bone marrow. Also found at lower levels in mature neutrophils and monocytes.</text>
</comment>
<comment type="domain">
    <text>Contains 1 copy of a cytoplasmic motif that is referred to as the immunoreceptor tyrosine-based inhibitor motif (ITIM). This motif is involved in modulation of cellular responses. The phosphorylated ITIM motif can bind the SH2 domain of several SH2-containing phosphatases.</text>
</comment>
<comment type="similarity">
    <text evidence="5">Belongs to the immunoglobulin superfamily. SIGLEC (sialic acid binding Ig-like lectin) family.</text>
</comment>
<comment type="online information" name="Functional Glycomics Gateway - Glycan Binding">
    <link uri="http://www.functionalglycomics.org/glycomics/GBPServlet?&amp;operationType=view&amp;cbpId=cbp_mou_Itlect_198"/>
    <text>Siglec-F</text>
</comment>
<keyword id="KW-0130">Cell adhesion</keyword>
<keyword id="KW-1015">Disulfide bond</keyword>
<keyword id="KW-0325">Glycoprotein</keyword>
<keyword id="KW-0393">Immunoglobulin domain</keyword>
<keyword id="KW-0430">Lectin</keyword>
<keyword id="KW-0472">Membrane</keyword>
<keyword id="KW-1185">Reference proteome</keyword>
<keyword id="KW-0677">Repeat</keyword>
<keyword id="KW-0732">Signal</keyword>
<keyword id="KW-0812">Transmembrane</keyword>
<keyword id="KW-1133">Transmembrane helix</keyword>
<protein>
    <recommendedName>
        <fullName>Sialic acid-binding Ig-like lectin 5</fullName>
        <shortName>Siglec-5</shortName>
    </recommendedName>
    <alternativeName>
        <fullName>Sialic acid-binding Ig-like lectin F</fullName>
        <shortName>Siglec-F</shortName>
        <shortName>mSiglec-F</shortName>
    </alternativeName>
    <cdAntigenName>CD170</cdAntigenName>
</protein>
<accession>Q920G3</accession>
<feature type="signal peptide" evidence="2">
    <location>
        <begin position="1"/>
        <end position="16"/>
    </location>
</feature>
<feature type="chain" id="PRO_0000014945" description="Sialic acid-binding Ig-like lectin 5">
    <location>
        <begin position="17"/>
        <end position="569"/>
    </location>
</feature>
<feature type="topological domain" description="Extracellular" evidence="2">
    <location>
        <begin position="17"/>
        <end position="439"/>
    </location>
</feature>
<feature type="transmembrane region" description="Helical" evidence="2">
    <location>
        <begin position="440"/>
        <end position="460"/>
    </location>
</feature>
<feature type="topological domain" description="Cytoplasmic" evidence="2">
    <location>
        <begin position="461"/>
        <end position="569"/>
    </location>
</feature>
<feature type="domain" description="Ig-like V-type">
    <location>
        <begin position="18"/>
        <end position="116"/>
    </location>
</feature>
<feature type="domain" description="Ig-like C2-type 1">
    <location>
        <begin position="139"/>
        <end position="224"/>
    </location>
</feature>
<feature type="domain" description="Ig-like C2-type 2">
    <location>
        <begin position="229"/>
        <end position="324"/>
    </location>
</feature>
<feature type="region of interest" description="Disordered" evidence="4">
    <location>
        <begin position="508"/>
        <end position="556"/>
    </location>
</feature>
<feature type="short sequence motif" description="ITIM motif">
    <location>
        <begin position="536"/>
        <end position="541"/>
    </location>
</feature>
<feature type="short sequence motif" description="SLAM-like motif">
    <location>
        <begin position="559"/>
        <end position="564"/>
    </location>
</feature>
<feature type="binding site" evidence="1">
    <location>
        <position position="114"/>
    </location>
    <ligand>
        <name>N-acetylneuraminate</name>
        <dbReference type="ChEBI" id="CHEBI:35418"/>
    </ligand>
</feature>
<feature type="binding site" evidence="1">
    <location>
        <position position="120"/>
    </location>
    <ligand>
        <name>N-acetylneuraminate</name>
        <dbReference type="ChEBI" id="CHEBI:35418"/>
    </ligand>
</feature>
<feature type="binding site" evidence="1">
    <location>
        <position position="122"/>
    </location>
    <ligand>
        <name>N-acetylneuraminate</name>
        <dbReference type="ChEBI" id="CHEBI:35418"/>
    </ligand>
</feature>
<feature type="glycosylation site" description="N-linked (GlcNAc...) asparagine" evidence="2">
    <location>
        <position position="95"/>
    </location>
</feature>
<feature type="glycosylation site" description="N-linked (GlcNAc...) asparagine" evidence="2">
    <location>
        <position position="151"/>
    </location>
</feature>
<feature type="glycosylation site" description="N-linked (GlcNAc...) asparagine" evidence="2">
    <location>
        <position position="200"/>
    </location>
</feature>
<feature type="glycosylation site" description="N-linked (GlcNAc...) asparagine" evidence="2">
    <location>
        <position position="203"/>
    </location>
</feature>
<feature type="glycosylation site" description="N-linked (GlcNAc...) asparagine" evidence="2">
    <location>
        <position position="369"/>
    </location>
</feature>
<feature type="glycosylation site" description="N-linked (GlcNAc...) asparagine" evidence="2">
    <location>
        <position position="372"/>
    </location>
</feature>
<feature type="glycosylation site" description="N-linked (GlcNAc...) asparagine" evidence="2">
    <location>
        <position position="387"/>
    </location>
</feature>
<feature type="disulfide bond" evidence="3">
    <location>
        <begin position="35"/>
        <end position="163"/>
    </location>
</feature>
<feature type="disulfide bond" evidence="3">
    <location>
        <begin position="40"/>
        <end position="96"/>
    </location>
</feature>
<feature type="disulfide bond" evidence="3">
    <location>
        <begin position="157"/>
        <end position="206"/>
    </location>
</feature>
<feature type="disulfide bond" evidence="3">
    <location>
        <begin position="265"/>
        <end position="308"/>
    </location>
</feature>
<dbReference type="EMBL" id="AF293371">
    <property type="protein sequence ID" value="AAL11043.1"/>
    <property type="molecule type" value="mRNA"/>
</dbReference>
<dbReference type="CCDS" id="CCDS21167.1"/>
<dbReference type="RefSeq" id="NP_001257948.1">
    <property type="nucleotide sequence ID" value="NM_001271019.1"/>
</dbReference>
<dbReference type="RefSeq" id="NP_663556.1">
    <property type="nucleotide sequence ID" value="NM_145581.2"/>
</dbReference>
<dbReference type="SMR" id="Q920G3"/>
<dbReference type="BioGRID" id="231382">
    <property type="interactions" value="1"/>
</dbReference>
<dbReference type="FunCoup" id="Q920G3">
    <property type="interactions" value="179"/>
</dbReference>
<dbReference type="IntAct" id="Q920G3">
    <property type="interactions" value="4"/>
</dbReference>
<dbReference type="STRING" id="10090.ENSMUSP00000113245"/>
<dbReference type="GlyCosmos" id="Q920G3">
    <property type="glycosylation" value="7 sites, No reported glycans"/>
</dbReference>
<dbReference type="GlyGen" id="Q920G3">
    <property type="glycosylation" value="8 sites, 3 N-linked glycans (3 sites)"/>
</dbReference>
<dbReference type="iPTMnet" id="Q920G3"/>
<dbReference type="PhosphoSitePlus" id="Q920G3"/>
<dbReference type="PaxDb" id="10090-ENSMUSP00000113245"/>
<dbReference type="DNASU" id="233186"/>
<dbReference type="Ensembl" id="ENSMUST00000012798.14">
    <property type="protein sequence ID" value="ENSMUSP00000012798.8"/>
    <property type="gene ID" value="ENSMUSG00000039013.17"/>
</dbReference>
<dbReference type="Ensembl" id="ENSMUST00000122423.8">
    <property type="protein sequence ID" value="ENSMUSP00000113245.2"/>
    <property type="gene ID" value="ENSMUSG00000039013.17"/>
</dbReference>
<dbReference type="GeneID" id="233186"/>
<dbReference type="KEGG" id="mmu:233186"/>
<dbReference type="UCSC" id="uc009gml.2">
    <property type="organism name" value="mouse"/>
</dbReference>
<dbReference type="AGR" id="MGI:2681107"/>
<dbReference type="CTD" id="233186"/>
<dbReference type="MGI" id="MGI:2681107">
    <property type="gene designation" value="Siglec5"/>
</dbReference>
<dbReference type="VEuPathDB" id="HostDB:ENSMUSG00000039013"/>
<dbReference type="eggNOG" id="ENOG502S41V">
    <property type="taxonomic scope" value="Eukaryota"/>
</dbReference>
<dbReference type="GeneTree" id="ENSGT01080000257333"/>
<dbReference type="InParanoid" id="Q920G3"/>
<dbReference type="OMA" id="SITCEMP"/>
<dbReference type="OrthoDB" id="10012075at2759"/>
<dbReference type="PhylomeDB" id="Q920G3"/>
<dbReference type="TreeFam" id="TF332441"/>
<dbReference type="Reactome" id="R-MMU-198933">
    <property type="pathway name" value="Immunoregulatory interactions between a Lymphoid and a non-Lymphoid cell"/>
</dbReference>
<dbReference type="BioGRID-ORCS" id="233186">
    <property type="hits" value="2 hits in 76 CRISPR screens"/>
</dbReference>
<dbReference type="ChiTaRS" id="Siglecf">
    <property type="organism name" value="mouse"/>
</dbReference>
<dbReference type="PRO" id="PR:Q920G3"/>
<dbReference type="Proteomes" id="UP000000589">
    <property type="component" value="Chromosome 7"/>
</dbReference>
<dbReference type="RNAct" id="Q920G3">
    <property type="molecule type" value="protein"/>
</dbReference>
<dbReference type="Bgee" id="ENSMUSG00000039013">
    <property type="expression patterns" value="Expressed in granulocyte and 50 other cell types or tissues"/>
</dbReference>
<dbReference type="ExpressionAtlas" id="Q920G3">
    <property type="expression patterns" value="baseline and differential"/>
</dbReference>
<dbReference type="GO" id="GO:0005764">
    <property type="term" value="C:lysosome"/>
    <property type="evidence" value="ECO:0000314"/>
    <property type="project" value="ARUK-UCL"/>
</dbReference>
<dbReference type="GO" id="GO:0016020">
    <property type="term" value="C:membrane"/>
    <property type="evidence" value="ECO:0007669"/>
    <property type="project" value="UniProtKB-SubCell"/>
</dbReference>
<dbReference type="GO" id="GO:0048029">
    <property type="term" value="F:monosaccharide binding"/>
    <property type="evidence" value="ECO:0000314"/>
    <property type="project" value="MGI"/>
</dbReference>
<dbReference type="GO" id="GO:0033691">
    <property type="term" value="F:sialic acid binding"/>
    <property type="evidence" value="ECO:0000314"/>
    <property type="project" value="ARUK-UCL"/>
</dbReference>
<dbReference type="GO" id="GO:0007155">
    <property type="term" value="P:cell adhesion"/>
    <property type="evidence" value="ECO:0007669"/>
    <property type="project" value="UniProtKB-KW"/>
</dbReference>
<dbReference type="GO" id="GO:0030100">
    <property type="term" value="P:regulation of endocytosis"/>
    <property type="evidence" value="ECO:0000314"/>
    <property type="project" value="ARUK-UCL"/>
</dbReference>
<dbReference type="FunFam" id="2.60.40.10:FF:000912">
    <property type="entry name" value="Myeloid cell surface antigen CD33"/>
    <property type="match status" value="1"/>
</dbReference>
<dbReference type="FunFam" id="2.60.40.10:FF:001967">
    <property type="entry name" value="Sialic acid binding Ig like lectin 6"/>
    <property type="match status" value="1"/>
</dbReference>
<dbReference type="Gene3D" id="2.60.40.10">
    <property type="entry name" value="Immunoglobulins"/>
    <property type="match status" value="3"/>
</dbReference>
<dbReference type="InterPro" id="IPR007110">
    <property type="entry name" value="Ig-like_dom"/>
</dbReference>
<dbReference type="InterPro" id="IPR036179">
    <property type="entry name" value="Ig-like_dom_sf"/>
</dbReference>
<dbReference type="InterPro" id="IPR013783">
    <property type="entry name" value="Ig-like_fold"/>
</dbReference>
<dbReference type="InterPro" id="IPR013098">
    <property type="entry name" value="Ig_I-set"/>
</dbReference>
<dbReference type="InterPro" id="IPR003599">
    <property type="entry name" value="Ig_sub"/>
</dbReference>
<dbReference type="InterPro" id="IPR003598">
    <property type="entry name" value="Ig_sub2"/>
</dbReference>
<dbReference type="InterPro" id="IPR013106">
    <property type="entry name" value="Ig_V-set"/>
</dbReference>
<dbReference type="InterPro" id="IPR051036">
    <property type="entry name" value="SIGLEC"/>
</dbReference>
<dbReference type="PANTHER" id="PTHR12035:SF132">
    <property type="entry name" value="MYELOID CELL SURFACE ANTIGEN CD33"/>
    <property type="match status" value="1"/>
</dbReference>
<dbReference type="PANTHER" id="PTHR12035">
    <property type="entry name" value="SIALIC ACID BINDING IMMUNOGLOBULIN-LIKE LECTIN"/>
    <property type="match status" value="1"/>
</dbReference>
<dbReference type="Pfam" id="PF07679">
    <property type="entry name" value="I-set"/>
    <property type="match status" value="1"/>
</dbReference>
<dbReference type="Pfam" id="PF07686">
    <property type="entry name" value="V-set"/>
    <property type="match status" value="1"/>
</dbReference>
<dbReference type="SMART" id="SM00409">
    <property type="entry name" value="IG"/>
    <property type="match status" value="3"/>
</dbReference>
<dbReference type="SMART" id="SM00408">
    <property type="entry name" value="IGc2"/>
    <property type="match status" value="1"/>
</dbReference>
<dbReference type="SUPFAM" id="SSF48726">
    <property type="entry name" value="Immunoglobulin"/>
    <property type="match status" value="4"/>
</dbReference>
<dbReference type="PROSITE" id="PS50835">
    <property type="entry name" value="IG_LIKE"/>
    <property type="match status" value="2"/>
</dbReference>
<name>SIGL5_MOUSE</name>
<reference key="1">
    <citation type="journal article" date="2001" name="J. Biol. Chem.">
        <title>Cloning and characterization of a novel mouse Siglec, mSiglec-F: differential evolution of the mouse and human (CD33) Siglec-3-related gene clusters.</title>
        <authorList>
            <person name="Angata T."/>
            <person name="Hingorani R."/>
            <person name="Varki N.M."/>
            <person name="Varki A."/>
        </authorList>
    </citation>
    <scope>NUCLEOTIDE SEQUENCE [MRNA]</scope>
    <source>
        <strain>C57BL/6J</strain>
    </source>
</reference>
<gene>
    <name type="primary">Siglec5</name>
    <name type="synonym">Siglecf</name>
</gene>
<sequence length="569" mass="61476">MRWAWLLPLLWAGCLATDGYSLSVTGSVTVQEGLCVFVACQVQYPNSKGPVFGYWFREGANIFSGSPVATNDPQRSVLKEAQGRFYLMGKENSHNCSLDIRDAQKIDTGTYFFRLDGSVKYSFQKSMLSVLVIALTEVPNIQVTSTLVSGNSTKLLCSVPWACEQGTPPIFSWMSSALTSLGHRTTLSSELNLTPRPQDNGTNLTCQVNLPGTGVTVERTQQLSVIYAPQKMTIRVSWGDDTGTKVLQSGASLQIQEGESLSLVCMADSNPPAVLSWERPTQKPFQLSTPAELQLPRAELEDQGKYICQAQNSQGAQTASVSLSIRSLLQLLGPSCSFEGQGLHCSCSSRAWPAPSLRWRLGEGVLEGNSSNGSFTVKSSSAGQWANSSLILSMEFSSNHRLSCEAWSDNRVQRATILLVSGPKVSQAGKSETSRGTVLGAIWGAGLMALLAVCLCLIFFTVKVLRKKSALKVAATKGNHLAKNPASTINSASITSSNIALGYPIQGHLNEPGSQTQKEQPPLATVPDTQKDEPELHYASLSFQGPMPPKPQNTEAMKSVYTEIKIHKC</sequence>